<evidence type="ECO:0000255" key="1">
    <source>
        <dbReference type="HAMAP-Rule" id="MF_00530"/>
    </source>
</evidence>
<feature type="chain" id="PRO_1000056457" description="ATP synthase epsilon chain">
    <location>
        <begin position="1"/>
        <end position="135"/>
    </location>
</feature>
<name>ATPE_BRASB</name>
<keyword id="KW-0066">ATP synthesis</keyword>
<keyword id="KW-0997">Cell inner membrane</keyword>
<keyword id="KW-1003">Cell membrane</keyword>
<keyword id="KW-0139">CF(1)</keyword>
<keyword id="KW-0375">Hydrogen ion transport</keyword>
<keyword id="KW-0406">Ion transport</keyword>
<keyword id="KW-0472">Membrane</keyword>
<keyword id="KW-1185">Reference proteome</keyword>
<keyword id="KW-0813">Transport</keyword>
<sequence length="135" mass="14413">MATFHFDLVSPEKIAFSGEVDQVDVPGQEGDFGVLAGHAPFVATLRPGILTVTAGGTQQKIIVLGGLAEISEKGLTILADVATSLKELDQTAFAAEISGMEAKLNEKQGNELDRAIERLDHFKTIQQQLNTTALH</sequence>
<gene>
    <name evidence="1" type="primary">atpC</name>
    <name type="ordered locus">BBta_0409</name>
</gene>
<accession>A5E951</accession>
<protein>
    <recommendedName>
        <fullName evidence="1">ATP synthase epsilon chain</fullName>
    </recommendedName>
    <alternativeName>
        <fullName evidence="1">ATP synthase F1 sector epsilon subunit</fullName>
    </alternativeName>
    <alternativeName>
        <fullName evidence="1">F-ATPase epsilon subunit</fullName>
    </alternativeName>
</protein>
<dbReference type="EMBL" id="CP000494">
    <property type="protein sequence ID" value="ABQ32695.1"/>
    <property type="molecule type" value="Genomic_DNA"/>
</dbReference>
<dbReference type="RefSeq" id="WP_012040748.1">
    <property type="nucleotide sequence ID" value="NC_009485.1"/>
</dbReference>
<dbReference type="SMR" id="A5E951"/>
<dbReference type="STRING" id="288000.BBta_0409"/>
<dbReference type="KEGG" id="bbt:BBta_0409"/>
<dbReference type="eggNOG" id="COG0355">
    <property type="taxonomic scope" value="Bacteria"/>
</dbReference>
<dbReference type="HOGENOM" id="CLU_084338_2_1_5"/>
<dbReference type="OrthoDB" id="9799969at2"/>
<dbReference type="Proteomes" id="UP000000246">
    <property type="component" value="Chromosome"/>
</dbReference>
<dbReference type="GO" id="GO:0005886">
    <property type="term" value="C:plasma membrane"/>
    <property type="evidence" value="ECO:0007669"/>
    <property type="project" value="UniProtKB-SubCell"/>
</dbReference>
<dbReference type="GO" id="GO:0045259">
    <property type="term" value="C:proton-transporting ATP synthase complex"/>
    <property type="evidence" value="ECO:0007669"/>
    <property type="project" value="UniProtKB-KW"/>
</dbReference>
<dbReference type="GO" id="GO:0005524">
    <property type="term" value="F:ATP binding"/>
    <property type="evidence" value="ECO:0007669"/>
    <property type="project" value="UniProtKB-UniRule"/>
</dbReference>
<dbReference type="GO" id="GO:0046933">
    <property type="term" value="F:proton-transporting ATP synthase activity, rotational mechanism"/>
    <property type="evidence" value="ECO:0007669"/>
    <property type="project" value="UniProtKB-UniRule"/>
</dbReference>
<dbReference type="CDD" id="cd12152">
    <property type="entry name" value="F1-ATPase_delta"/>
    <property type="match status" value="1"/>
</dbReference>
<dbReference type="Gene3D" id="2.60.15.10">
    <property type="entry name" value="F0F1 ATP synthase delta/epsilon subunit, N-terminal"/>
    <property type="match status" value="1"/>
</dbReference>
<dbReference type="HAMAP" id="MF_00530">
    <property type="entry name" value="ATP_synth_epsil_bac"/>
    <property type="match status" value="1"/>
</dbReference>
<dbReference type="InterPro" id="IPR001469">
    <property type="entry name" value="ATP_synth_F1_dsu/esu"/>
</dbReference>
<dbReference type="InterPro" id="IPR020546">
    <property type="entry name" value="ATP_synth_F1_dsu/esu_N"/>
</dbReference>
<dbReference type="InterPro" id="IPR036771">
    <property type="entry name" value="ATPsynth_dsu/esu_N"/>
</dbReference>
<dbReference type="NCBIfam" id="TIGR01216">
    <property type="entry name" value="ATP_synt_epsi"/>
    <property type="match status" value="1"/>
</dbReference>
<dbReference type="NCBIfam" id="NF001851">
    <property type="entry name" value="PRK00571.2-4"/>
    <property type="match status" value="1"/>
</dbReference>
<dbReference type="NCBIfam" id="NF009982">
    <property type="entry name" value="PRK13448.1"/>
    <property type="match status" value="1"/>
</dbReference>
<dbReference type="NCBIfam" id="NF009983">
    <property type="entry name" value="PRK13449.1"/>
    <property type="match status" value="1"/>
</dbReference>
<dbReference type="PANTHER" id="PTHR13822">
    <property type="entry name" value="ATP SYNTHASE DELTA/EPSILON CHAIN"/>
    <property type="match status" value="1"/>
</dbReference>
<dbReference type="PANTHER" id="PTHR13822:SF10">
    <property type="entry name" value="ATP SYNTHASE EPSILON CHAIN, CHLOROPLASTIC"/>
    <property type="match status" value="1"/>
</dbReference>
<dbReference type="Pfam" id="PF02823">
    <property type="entry name" value="ATP-synt_DE_N"/>
    <property type="match status" value="1"/>
</dbReference>
<dbReference type="SUPFAM" id="SSF51344">
    <property type="entry name" value="Epsilon subunit of F1F0-ATP synthase N-terminal domain"/>
    <property type="match status" value="1"/>
</dbReference>
<proteinExistence type="inferred from homology"/>
<reference key="1">
    <citation type="journal article" date="2007" name="Science">
        <title>Legumes symbioses: absence of nod genes in photosynthetic bradyrhizobia.</title>
        <authorList>
            <person name="Giraud E."/>
            <person name="Moulin L."/>
            <person name="Vallenet D."/>
            <person name="Barbe V."/>
            <person name="Cytryn E."/>
            <person name="Avarre J.-C."/>
            <person name="Jaubert M."/>
            <person name="Simon D."/>
            <person name="Cartieaux F."/>
            <person name="Prin Y."/>
            <person name="Bena G."/>
            <person name="Hannibal L."/>
            <person name="Fardoux J."/>
            <person name="Kojadinovic M."/>
            <person name="Vuillet L."/>
            <person name="Lajus A."/>
            <person name="Cruveiller S."/>
            <person name="Rouy Z."/>
            <person name="Mangenot S."/>
            <person name="Segurens B."/>
            <person name="Dossat C."/>
            <person name="Franck W.L."/>
            <person name="Chang W.-S."/>
            <person name="Saunders E."/>
            <person name="Bruce D."/>
            <person name="Richardson P."/>
            <person name="Normand P."/>
            <person name="Dreyfus B."/>
            <person name="Pignol D."/>
            <person name="Stacey G."/>
            <person name="Emerich D."/>
            <person name="Vermeglio A."/>
            <person name="Medigue C."/>
            <person name="Sadowsky M."/>
        </authorList>
    </citation>
    <scope>NUCLEOTIDE SEQUENCE [LARGE SCALE GENOMIC DNA]</scope>
    <source>
        <strain>BTAi1 / ATCC BAA-1182</strain>
    </source>
</reference>
<organism>
    <name type="scientific">Bradyrhizobium sp. (strain BTAi1 / ATCC BAA-1182)</name>
    <dbReference type="NCBI Taxonomy" id="288000"/>
    <lineage>
        <taxon>Bacteria</taxon>
        <taxon>Pseudomonadati</taxon>
        <taxon>Pseudomonadota</taxon>
        <taxon>Alphaproteobacteria</taxon>
        <taxon>Hyphomicrobiales</taxon>
        <taxon>Nitrobacteraceae</taxon>
        <taxon>Bradyrhizobium</taxon>
    </lineage>
</organism>
<comment type="function">
    <text evidence="1">Produces ATP from ADP in the presence of a proton gradient across the membrane.</text>
</comment>
<comment type="subunit">
    <text evidence="1">F-type ATPases have 2 components, CF(1) - the catalytic core - and CF(0) - the membrane proton channel. CF(1) has five subunits: alpha(3), beta(3), gamma(1), delta(1), epsilon(1). CF(0) has three main subunits: a, b and c.</text>
</comment>
<comment type="subcellular location">
    <subcellularLocation>
        <location evidence="1">Cell inner membrane</location>
        <topology evidence="1">Peripheral membrane protein</topology>
    </subcellularLocation>
</comment>
<comment type="similarity">
    <text evidence="1">Belongs to the ATPase epsilon chain family.</text>
</comment>